<proteinExistence type="inferred from homology"/>
<accession>A9BF32</accession>
<sequence>MANVSSFQRKIAKIKIGIASPQSILEASNGEVKKPETLNHRTGKPEKDGLFCEKIFGPVKDYECACGKYKGKKYEGTVCERCGVKVESKEARRRKIGHIELATPISHIWYLKSSPSILSIILNIGVKDLENIIYYGSKRVIERAYLTLPGPENENLGYLPGEILYQREYEIYDEYLDLRVEPAVKIVSVKGMPVADIDGKVEIKSELTHTERELNWIIIRDDTGVERKYPVFEGSSIMVENGQEVEKGTPLADRFLFEEDYLTQKEYSLFLEYYPGSIEVERDIERDTPIVVITDIDKRFAKRIDKKIGDILLEDEARAYEEVMKVLNSKIKEERENVIDKELVSEIEFPEKKFEKGTKITQEVLNELQEFGVKDLVAKEEDGTEKIFQINRYEKFEYGYGAEAIQKLLTKIDLEVLKARLESELEKLDRKSQKSVKILRRLKLVKDFIKSGNQPEWLITNIIPVIPPDLRPLIQIDGGRFAATDLNDLYRKVINRNNRLRKLLEMEAPEIIVRNEKRILQQAVDSLFYNGRVGKPMTDRNRRPLRSLTDLLKGKKGRFRRNLLGKRVDYSGRAVIAVGPDLKIHECGLPKKMALELFKPFVLAELLRDSNVASKSARKFKKTIIEKEMPEAWEVLEEVIKGHPVLLNRAPTLHRVSIQAFIPKLIEGNAIRLHPLVCPPFNADFDGDQMAIHIPLSNIAQAESKFLMLSRYNIISPANGKPLSMPGKDIIAGAYYLTMHEDEKFKNLKVPTKVSELGKNGYVKHIFSEDLEATYAYEYLKIVDSDIYLQDGKLIWKKSDLPLHEPVAFRYKDGSILKTTIGKIIFNEEVPEDLRDYTQKMDKKNLKELIFNTFEKHGIDRTADLLDSIKDFGFHYATLSGLTISIRDVLVSPKREELIEESKGEVLRIESLYEEGYLTDNERYKEIIKIWESATAKVTEETAKTYRKYTFNPIWMMIESGARGNIDQLKQLAGMRGLMADPSGKIIEVPITSNFKNGLSELEFFTSTHGSRKGSADTALRTSTAGYLTRRLVDVAQSITITEEDCGTDKGIEARELWADDSKIENLSDFLFGRVLAKDVLDPETKEVIFNPQADKKYERGIILKEKDAQFLANYVKEIPVSKEKTIKIEDMPKDSYLESLEDVQVEGKVLIKKGEEITEEAIEEAFLHGIQKLDVKEYTAVDYVYSGEDLKVEIDGKTVTLLKYQERIDLKVSKVLEKHGIKTVTVRPSIFIRSPLTCESENGLCAKCYGMDLSNYKLVNRGEAVGIIAAQSIGEPGTQLTMRTFHTGGIATTSDITQGLPRAEELFEARKKTKGPEGEFSKTKGIVRAIERDTENKRGRRLKIIIENSDGELESYEADYRTKAVVEEGDKVLAGQRLTTGNIKPRNILKELGVGPLANYLLSEIKKIYAEQGVDIHDKHFEIIIRQMINKVEIIDGGDTDFMPGDLVSYGKVQKINEEILEENSYITENRELVVGKKLAKRVIIPAEDEEEEEDKIFEQGTEITEEILNQIIETNIKEIEVYEEYKEITTEEGKTHLVGTSKKYLINPKDTIKYERRLLRITKASLEREGWLSAASFQQTVQILTEAAIEGKVDRLKGLKENVIVGQPIPAGTGLKLYADQNYEVVQPEKEAEAAQEKSVG</sequence>
<comment type="function">
    <text evidence="1">DNA-dependent RNA polymerase catalyzes the transcription of DNA into RNA using the four ribonucleoside triphosphates as substrates.</text>
</comment>
<comment type="catalytic activity">
    <reaction evidence="1">
        <text>RNA(n) + a ribonucleoside 5'-triphosphate = RNA(n+1) + diphosphate</text>
        <dbReference type="Rhea" id="RHEA:21248"/>
        <dbReference type="Rhea" id="RHEA-COMP:14527"/>
        <dbReference type="Rhea" id="RHEA-COMP:17342"/>
        <dbReference type="ChEBI" id="CHEBI:33019"/>
        <dbReference type="ChEBI" id="CHEBI:61557"/>
        <dbReference type="ChEBI" id="CHEBI:140395"/>
        <dbReference type="EC" id="2.7.7.6"/>
    </reaction>
</comment>
<comment type="cofactor">
    <cofactor evidence="1">
        <name>Mg(2+)</name>
        <dbReference type="ChEBI" id="CHEBI:18420"/>
    </cofactor>
    <text evidence="1">Binds 1 Mg(2+) ion per subunit.</text>
</comment>
<comment type="cofactor">
    <cofactor evidence="1">
        <name>Zn(2+)</name>
        <dbReference type="ChEBI" id="CHEBI:29105"/>
    </cofactor>
    <text evidence="1">Binds 2 Zn(2+) ions per subunit.</text>
</comment>
<comment type="subunit">
    <text evidence="1">The RNAP catalytic core consists of 2 alpha, 1 beta, 1 beta' and 1 omega subunit. When a sigma factor is associated with the core the holoenzyme is formed, which can initiate transcription.</text>
</comment>
<comment type="similarity">
    <text evidence="1">Belongs to the RNA polymerase beta' chain family.</text>
</comment>
<dbReference type="EC" id="2.7.7.6" evidence="1"/>
<dbReference type="EMBL" id="CP000879">
    <property type="protein sequence ID" value="ABX31096.1"/>
    <property type="molecule type" value="Genomic_DNA"/>
</dbReference>
<dbReference type="RefSeq" id="WP_012208203.1">
    <property type="nucleotide sequence ID" value="NC_010003.1"/>
</dbReference>
<dbReference type="SMR" id="A9BF32"/>
<dbReference type="STRING" id="403833.Pmob_0354"/>
<dbReference type="KEGG" id="pmo:Pmob_0354"/>
<dbReference type="eggNOG" id="COG0086">
    <property type="taxonomic scope" value="Bacteria"/>
</dbReference>
<dbReference type="HOGENOM" id="CLU_000524_3_1_0"/>
<dbReference type="OrthoDB" id="9815296at2"/>
<dbReference type="Proteomes" id="UP000000789">
    <property type="component" value="Chromosome"/>
</dbReference>
<dbReference type="GO" id="GO:0000428">
    <property type="term" value="C:DNA-directed RNA polymerase complex"/>
    <property type="evidence" value="ECO:0007669"/>
    <property type="project" value="UniProtKB-KW"/>
</dbReference>
<dbReference type="GO" id="GO:0003677">
    <property type="term" value="F:DNA binding"/>
    <property type="evidence" value="ECO:0007669"/>
    <property type="project" value="UniProtKB-UniRule"/>
</dbReference>
<dbReference type="GO" id="GO:0003899">
    <property type="term" value="F:DNA-directed RNA polymerase activity"/>
    <property type="evidence" value="ECO:0007669"/>
    <property type="project" value="UniProtKB-UniRule"/>
</dbReference>
<dbReference type="GO" id="GO:0000287">
    <property type="term" value="F:magnesium ion binding"/>
    <property type="evidence" value="ECO:0007669"/>
    <property type="project" value="UniProtKB-UniRule"/>
</dbReference>
<dbReference type="GO" id="GO:0008270">
    <property type="term" value="F:zinc ion binding"/>
    <property type="evidence" value="ECO:0007669"/>
    <property type="project" value="UniProtKB-UniRule"/>
</dbReference>
<dbReference type="GO" id="GO:0006351">
    <property type="term" value="P:DNA-templated transcription"/>
    <property type="evidence" value="ECO:0007669"/>
    <property type="project" value="UniProtKB-UniRule"/>
</dbReference>
<dbReference type="CDD" id="cd02655">
    <property type="entry name" value="RNAP_beta'_C"/>
    <property type="match status" value="1"/>
</dbReference>
<dbReference type="Gene3D" id="1.10.132.30">
    <property type="match status" value="1"/>
</dbReference>
<dbReference type="Gene3D" id="1.10.150.390">
    <property type="match status" value="1"/>
</dbReference>
<dbReference type="Gene3D" id="1.10.1790.20">
    <property type="match status" value="1"/>
</dbReference>
<dbReference type="Gene3D" id="1.10.40.90">
    <property type="match status" value="1"/>
</dbReference>
<dbReference type="Gene3D" id="2.40.40.20">
    <property type="match status" value="1"/>
</dbReference>
<dbReference type="Gene3D" id="2.40.50.100">
    <property type="match status" value="2"/>
</dbReference>
<dbReference type="Gene3D" id="4.10.860.120">
    <property type="entry name" value="RNA polymerase II, clamp domain"/>
    <property type="match status" value="1"/>
</dbReference>
<dbReference type="Gene3D" id="1.10.274.100">
    <property type="entry name" value="RNA polymerase Rpb1, domain 3"/>
    <property type="match status" value="1"/>
</dbReference>
<dbReference type="HAMAP" id="MF_01322">
    <property type="entry name" value="RNApol_bact_RpoC"/>
    <property type="match status" value="1"/>
</dbReference>
<dbReference type="InterPro" id="IPR045867">
    <property type="entry name" value="DNA-dir_RpoC_beta_prime"/>
</dbReference>
<dbReference type="InterPro" id="IPR012754">
    <property type="entry name" value="DNA-dir_RpoC_beta_prime_bact"/>
</dbReference>
<dbReference type="InterPro" id="IPR000722">
    <property type="entry name" value="RNA_pol_asu"/>
</dbReference>
<dbReference type="InterPro" id="IPR006592">
    <property type="entry name" value="RNA_pol_N"/>
</dbReference>
<dbReference type="InterPro" id="IPR007080">
    <property type="entry name" value="RNA_pol_Rpb1_1"/>
</dbReference>
<dbReference type="InterPro" id="IPR007066">
    <property type="entry name" value="RNA_pol_Rpb1_3"/>
</dbReference>
<dbReference type="InterPro" id="IPR042102">
    <property type="entry name" value="RNA_pol_Rpb1_3_sf"/>
</dbReference>
<dbReference type="InterPro" id="IPR007083">
    <property type="entry name" value="RNA_pol_Rpb1_4"/>
</dbReference>
<dbReference type="InterPro" id="IPR007081">
    <property type="entry name" value="RNA_pol_Rpb1_5"/>
</dbReference>
<dbReference type="InterPro" id="IPR044893">
    <property type="entry name" value="RNA_pol_Rpb1_clamp_domain"/>
</dbReference>
<dbReference type="InterPro" id="IPR038120">
    <property type="entry name" value="Rpb1_funnel_sf"/>
</dbReference>
<dbReference type="PANTHER" id="PTHR19376">
    <property type="entry name" value="DNA-DIRECTED RNA POLYMERASE"/>
    <property type="match status" value="1"/>
</dbReference>
<dbReference type="PANTHER" id="PTHR19376:SF54">
    <property type="entry name" value="DNA-DIRECTED RNA POLYMERASE SUBUNIT BETA"/>
    <property type="match status" value="1"/>
</dbReference>
<dbReference type="Pfam" id="PF04997">
    <property type="entry name" value="RNA_pol_Rpb1_1"/>
    <property type="match status" value="2"/>
</dbReference>
<dbReference type="Pfam" id="PF00623">
    <property type="entry name" value="RNA_pol_Rpb1_2"/>
    <property type="match status" value="2"/>
</dbReference>
<dbReference type="Pfam" id="PF04983">
    <property type="entry name" value="RNA_pol_Rpb1_3"/>
    <property type="match status" value="1"/>
</dbReference>
<dbReference type="Pfam" id="PF05000">
    <property type="entry name" value="RNA_pol_Rpb1_4"/>
    <property type="match status" value="1"/>
</dbReference>
<dbReference type="Pfam" id="PF04998">
    <property type="entry name" value="RNA_pol_Rpb1_5"/>
    <property type="match status" value="1"/>
</dbReference>
<dbReference type="SMART" id="SM00663">
    <property type="entry name" value="RPOLA_N"/>
    <property type="match status" value="1"/>
</dbReference>
<dbReference type="SUPFAM" id="SSF64484">
    <property type="entry name" value="beta and beta-prime subunits of DNA dependent RNA-polymerase"/>
    <property type="match status" value="1"/>
</dbReference>
<organism>
    <name type="scientific">Petrotoga mobilis (strain DSM 10674 / SJ95)</name>
    <dbReference type="NCBI Taxonomy" id="403833"/>
    <lineage>
        <taxon>Bacteria</taxon>
        <taxon>Thermotogati</taxon>
        <taxon>Thermotogota</taxon>
        <taxon>Thermotogae</taxon>
        <taxon>Petrotogales</taxon>
        <taxon>Petrotogaceae</taxon>
        <taxon>Petrotoga</taxon>
    </lineage>
</organism>
<gene>
    <name evidence="1" type="primary">rpoC</name>
    <name type="ordered locus">Pmob_0354</name>
</gene>
<evidence type="ECO:0000255" key="1">
    <source>
        <dbReference type="HAMAP-Rule" id="MF_01322"/>
    </source>
</evidence>
<name>RPOC_PETMO</name>
<keyword id="KW-0240">DNA-directed RNA polymerase</keyword>
<keyword id="KW-0460">Magnesium</keyword>
<keyword id="KW-0479">Metal-binding</keyword>
<keyword id="KW-0548">Nucleotidyltransferase</keyword>
<keyword id="KW-0804">Transcription</keyword>
<keyword id="KW-0808">Transferase</keyword>
<keyword id="KW-0862">Zinc</keyword>
<protein>
    <recommendedName>
        <fullName evidence="1">DNA-directed RNA polymerase subunit beta'</fullName>
        <shortName evidence="1">RNAP subunit beta'</shortName>
        <ecNumber evidence="1">2.7.7.6</ecNumber>
    </recommendedName>
    <alternativeName>
        <fullName evidence="1">RNA polymerase subunit beta'</fullName>
    </alternativeName>
    <alternativeName>
        <fullName evidence="1">Transcriptase subunit beta'</fullName>
    </alternativeName>
</protein>
<reference key="1">
    <citation type="submission" date="2007-11" db="EMBL/GenBank/DDBJ databases">
        <title>Complete sequence of Petroga mobilis SJ95.</title>
        <authorList>
            <consortium name="US DOE Joint Genome Institute"/>
            <person name="Copeland A."/>
            <person name="Lucas S."/>
            <person name="Lapidus A."/>
            <person name="Barry K."/>
            <person name="Glavina del Rio T."/>
            <person name="Dalin E."/>
            <person name="Tice H."/>
            <person name="Pitluck S."/>
            <person name="Meincke L."/>
            <person name="Brettin T."/>
            <person name="Bruce D."/>
            <person name="Detter J.C."/>
            <person name="Han C."/>
            <person name="Kuske C.R."/>
            <person name="Schmutz J."/>
            <person name="Larimer F."/>
            <person name="Land M."/>
            <person name="Hauser L."/>
            <person name="Kyrpides N."/>
            <person name="Mikhailova N."/>
            <person name="Noll K."/>
            <person name="Richardson P."/>
        </authorList>
    </citation>
    <scope>NUCLEOTIDE SEQUENCE [LARGE SCALE GENOMIC DNA]</scope>
    <source>
        <strain>DSM 10674 / SJ95</strain>
    </source>
</reference>
<feature type="chain" id="PRO_0000353404" description="DNA-directed RNA polymerase subunit beta'">
    <location>
        <begin position="1"/>
        <end position="1643"/>
    </location>
</feature>
<feature type="binding site" evidence="1">
    <location>
        <position position="64"/>
    </location>
    <ligand>
        <name>Zn(2+)</name>
        <dbReference type="ChEBI" id="CHEBI:29105"/>
        <label>1</label>
    </ligand>
</feature>
<feature type="binding site" evidence="1">
    <location>
        <position position="66"/>
    </location>
    <ligand>
        <name>Zn(2+)</name>
        <dbReference type="ChEBI" id="CHEBI:29105"/>
        <label>1</label>
    </ligand>
</feature>
<feature type="binding site" evidence="1">
    <location>
        <position position="79"/>
    </location>
    <ligand>
        <name>Zn(2+)</name>
        <dbReference type="ChEBI" id="CHEBI:29105"/>
        <label>1</label>
    </ligand>
</feature>
<feature type="binding site" evidence="1">
    <location>
        <position position="82"/>
    </location>
    <ligand>
        <name>Zn(2+)</name>
        <dbReference type="ChEBI" id="CHEBI:29105"/>
        <label>1</label>
    </ligand>
</feature>
<feature type="binding site" evidence="1">
    <location>
        <position position="684"/>
    </location>
    <ligand>
        <name>Mg(2+)</name>
        <dbReference type="ChEBI" id="CHEBI:18420"/>
    </ligand>
</feature>
<feature type="binding site" evidence="1">
    <location>
        <position position="686"/>
    </location>
    <ligand>
        <name>Mg(2+)</name>
        <dbReference type="ChEBI" id="CHEBI:18420"/>
    </ligand>
</feature>
<feature type="binding site" evidence="1">
    <location>
        <position position="688"/>
    </location>
    <ligand>
        <name>Mg(2+)</name>
        <dbReference type="ChEBI" id="CHEBI:18420"/>
    </ligand>
</feature>
<feature type="binding site" evidence="1">
    <location>
        <position position="1046"/>
    </location>
    <ligand>
        <name>Zn(2+)</name>
        <dbReference type="ChEBI" id="CHEBI:29105"/>
        <label>2</label>
    </ligand>
</feature>
<feature type="binding site" evidence="1">
    <location>
        <position position="1239"/>
    </location>
    <ligand>
        <name>Zn(2+)</name>
        <dbReference type="ChEBI" id="CHEBI:29105"/>
        <label>2</label>
    </ligand>
</feature>
<feature type="binding site" evidence="1">
    <location>
        <position position="1246"/>
    </location>
    <ligand>
        <name>Zn(2+)</name>
        <dbReference type="ChEBI" id="CHEBI:29105"/>
        <label>2</label>
    </ligand>
</feature>
<feature type="binding site" evidence="1">
    <location>
        <position position="1249"/>
    </location>
    <ligand>
        <name>Zn(2+)</name>
        <dbReference type="ChEBI" id="CHEBI:29105"/>
        <label>2</label>
    </ligand>
</feature>